<keyword id="KW-0025">Alternative splicing</keyword>
<keyword id="KW-0238">DNA-binding</keyword>
<keyword id="KW-0479">Metal-binding</keyword>
<keyword id="KW-0539">Nucleus</keyword>
<keyword id="KW-1267">Proteomics identification</keyword>
<keyword id="KW-1185">Reference proteome</keyword>
<keyword id="KW-0677">Repeat</keyword>
<keyword id="KW-0804">Transcription</keyword>
<keyword id="KW-0805">Transcription regulation</keyword>
<keyword id="KW-0862">Zinc</keyword>
<keyword id="KW-0863">Zinc-finger</keyword>
<evidence type="ECO:0000255" key="1">
    <source>
        <dbReference type="PROSITE-ProRule" id="PRU00042"/>
    </source>
</evidence>
<evidence type="ECO:0000255" key="2">
    <source>
        <dbReference type="PROSITE-ProRule" id="PRU00119"/>
    </source>
</evidence>
<evidence type="ECO:0000303" key="3">
    <source>
    </source>
</evidence>
<evidence type="ECO:0000303" key="4">
    <source>
    </source>
</evidence>
<evidence type="ECO:0000305" key="5"/>
<protein>
    <recommendedName>
        <fullName>Zinc finger protein 528</fullName>
    </recommendedName>
</protein>
<dbReference type="EMBL" id="AK056552">
    <property type="protein sequence ID" value="BAG51746.1"/>
    <property type="molecule type" value="mRNA"/>
</dbReference>
<dbReference type="EMBL" id="AL832630">
    <property type="protein sequence ID" value="CAD89949.1"/>
    <property type="molecule type" value="mRNA"/>
</dbReference>
<dbReference type="EMBL" id="CH471135">
    <property type="protein sequence ID" value="EAW72078.1"/>
    <property type="molecule type" value="Genomic_DNA"/>
</dbReference>
<dbReference type="EMBL" id="BC101712">
    <property type="protein sequence ID" value="AAI01713.1"/>
    <property type="molecule type" value="mRNA"/>
</dbReference>
<dbReference type="EMBL" id="BC111950">
    <property type="protein sequence ID" value="AAI11951.1"/>
    <property type="molecule type" value="mRNA"/>
</dbReference>
<dbReference type="EMBL" id="AB058730">
    <property type="protein sequence ID" value="BAB47456.1"/>
    <property type="status" value="ALT_INIT"/>
    <property type="molecule type" value="mRNA"/>
</dbReference>
<dbReference type="CCDS" id="CCDS33091.1">
    <molecule id="Q3MIS6-1"/>
</dbReference>
<dbReference type="RefSeq" id="NP_115799.2">
    <molecule id="Q3MIS6-1"/>
    <property type="nucleotide sequence ID" value="NM_032423.2"/>
</dbReference>
<dbReference type="SMR" id="Q3MIS6"/>
<dbReference type="BioGRID" id="124076">
    <property type="interactions" value="4"/>
</dbReference>
<dbReference type="FunCoup" id="Q3MIS6">
    <property type="interactions" value="42"/>
</dbReference>
<dbReference type="IntAct" id="Q3MIS6">
    <property type="interactions" value="1"/>
</dbReference>
<dbReference type="STRING" id="9606.ENSP00000353652"/>
<dbReference type="iPTMnet" id="Q3MIS6"/>
<dbReference type="PhosphoSitePlus" id="Q3MIS6"/>
<dbReference type="BioMuta" id="ZNF528"/>
<dbReference type="DMDM" id="121942828"/>
<dbReference type="jPOST" id="Q3MIS6"/>
<dbReference type="MassIVE" id="Q3MIS6"/>
<dbReference type="PaxDb" id="9606-ENSP00000353652"/>
<dbReference type="PeptideAtlas" id="Q3MIS6"/>
<dbReference type="ProteomicsDB" id="61792">
    <molecule id="Q3MIS6-1"/>
</dbReference>
<dbReference type="ProteomicsDB" id="61793">
    <molecule id="Q3MIS6-2"/>
</dbReference>
<dbReference type="Antibodypedia" id="32595">
    <property type="antibodies" value="21 antibodies from 8 providers"/>
</dbReference>
<dbReference type="DNASU" id="84436"/>
<dbReference type="Ensembl" id="ENST00000360465.8">
    <molecule id="Q3MIS6-1"/>
    <property type="protein sequence ID" value="ENSP00000353652.3"/>
    <property type="gene ID" value="ENSG00000167555.14"/>
</dbReference>
<dbReference type="GeneID" id="84436"/>
<dbReference type="KEGG" id="hsa:84436"/>
<dbReference type="MANE-Select" id="ENST00000360465.8">
    <property type="protein sequence ID" value="ENSP00000353652.3"/>
    <property type="RefSeq nucleotide sequence ID" value="NM_032423.3"/>
    <property type="RefSeq protein sequence ID" value="NP_115799.2"/>
</dbReference>
<dbReference type="UCSC" id="uc002pzh.3">
    <molecule id="Q3MIS6-1"/>
    <property type="organism name" value="human"/>
</dbReference>
<dbReference type="AGR" id="HGNC:29384"/>
<dbReference type="CTD" id="84436"/>
<dbReference type="DisGeNET" id="84436"/>
<dbReference type="GeneCards" id="ZNF528"/>
<dbReference type="HGNC" id="HGNC:29384">
    <property type="gene designation" value="ZNF528"/>
</dbReference>
<dbReference type="HPA" id="ENSG00000167555">
    <property type="expression patterns" value="Low tissue specificity"/>
</dbReference>
<dbReference type="MIM" id="615580">
    <property type="type" value="gene"/>
</dbReference>
<dbReference type="neXtProt" id="NX_Q3MIS6"/>
<dbReference type="OpenTargets" id="ENSG00000167555"/>
<dbReference type="PharmGKB" id="PA134869369"/>
<dbReference type="VEuPathDB" id="HostDB:ENSG00000167555"/>
<dbReference type="eggNOG" id="KOG1721">
    <property type="taxonomic scope" value="Eukaryota"/>
</dbReference>
<dbReference type="GeneTree" id="ENSGT00940000163013"/>
<dbReference type="HOGENOM" id="CLU_002678_44_5_1"/>
<dbReference type="InParanoid" id="Q3MIS6"/>
<dbReference type="OMA" id="HNADNPY"/>
<dbReference type="OrthoDB" id="427030at2759"/>
<dbReference type="PAN-GO" id="Q3MIS6">
    <property type="GO annotations" value="4 GO annotations based on evolutionary models"/>
</dbReference>
<dbReference type="PhylomeDB" id="Q3MIS6"/>
<dbReference type="TreeFam" id="TF341892"/>
<dbReference type="PathwayCommons" id="Q3MIS6"/>
<dbReference type="Reactome" id="R-HSA-212436">
    <property type="pathway name" value="Generic Transcription Pathway"/>
</dbReference>
<dbReference type="BioGRID-ORCS" id="84436">
    <property type="hits" value="6 hits in 1176 CRISPR screens"/>
</dbReference>
<dbReference type="ChiTaRS" id="ZNF528">
    <property type="organism name" value="human"/>
</dbReference>
<dbReference type="GenomeRNAi" id="84436"/>
<dbReference type="Pharos" id="Q3MIS6">
    <property type="development level" value="Tdark"/>
</dbReference>
<dbReference type="PRO" id="PR:Q3MIS6"/>
<dbReference type="Proteomes" id="UP000005640">
    <property type="component" value="Chromosome 19"/>
</dbReference>
<dbReference type="RNAct" id="Q3MIS6">
    <property type="molecule type" value="protein"/>
</dbReference>
<dbReference type="Bgee" id="ENSG00000167555">
    <property type="expression patterns" value="Expressed in buccal mucosa cell and 120 other cell types or tissues"/>
</dbReference>
<dbReference type="ExpressionAtlas" id="Q3MIS6">
    <property type="expression patterns" value="baseline and differential"/>
</dbReference>
<dbReference type="GO" id="GO:0005634">
    <property type="term" value="C:nucleus"/>
    <property type="evidence" value="ECO:0000318"/>
    <property type="project" value="GO_Central"/>
</dbReference>
<dbReference type="GO" id="GO:0000981">
    <property type="term" value="F:DNA-binding transcription factor activity, RNA polymerase II-specific"/>
    <property type="evidence" value="ECO:0000318"/>
    <property type="project" value="GO_Central"/>
</dbReference>
<dbReference type="GO" id="GO:0000978">
    <property type="term" value="F:RNA polymerase II cis-regulatory region sequence-specific DNA binding"/>
    <property type="evidence" value="ECO:0000318"/>
    <property type="project" value="GO_Central"/>
</dbReference>
<dbReference type="GO" id="GO:0008270">
    <property type="term" value="F:zinc ion binding"/>
    <property type="evidence" value="ECO:0007669"/>
    <property type="project" value="UniProtKB-KW"/>
</dbReference>
<dbReference type="GO" id="GO:0006357">
    <property type="term" value="P:regulation of transcription by RNA polymerase II"/>
    <property type="evidence" value="ECO:0000318"/>
    <property type="project" value="GO_Central"/>
</dbReference>
<dbReference type="CDD" id="cd07765">
    <property type="entry name" value="KRAB_A-box"/>
    <property type="match status" value="1"/>
</dbReference>
<dbReference type="FunFam" id="3.30.160.60:FF:000040">
    <property type="entry name" value="RB associated KRAB zinc finger"/>
    <property type="match status" value="1"/>
</dbReference>
<dbReference type="FunFam" id="3.30.160.60:FF:000295">
    <property type="entry name" value="zinc finger protein 19"/>
    <property type="match status" value="1"/>
</dbReference>
<dbReference type="FunFam" id="3.30.160.60:FF:000128">
    <property type="entry name" value="zinc finger protein 268 isoform X1"/>
    <property type="match status" value="1"/>
</dbReference>
<dbReference type="FunFam" id="3.30.160.60:FF:000992">
    <property type="entry name" value="Zinc finger protein 320"/>
    <property type="match status" value="1"/>
</dbReference>
<dbReference type="FunFam" id="3.30.160.60:FF:000690">
    <property type="entry name" value="Zinc finger protein 354C"/>
    <property type="match status" value="1"/>
</dbReference>
<dbReference type="FunFam" id="3.30.160.60:FF:001498">
    <property type="entry name" value="Zinc finger protein 404"/>
    <property type="match status" value="2"/>
</dbReference>
<dbReference type="FunFam" id="3.30.160.60:FF:001064">
    <property type="entry name" value="Zinc finger protein 425"/>
    <property type="match status" value="1"/>
</dbReference>
<dbReference type="FunFam" id="3.30.160.60:FF:002090">
    <property type="entry name" value="Zinc finger protein 473"/>
    <property type="match status" value="2"/>
</dbReference>
<dbReference type="FunFam" id="3.30.160.60:FF:001146">
    <property type="entry name" value="Zinc finger protein 555"/>
    <property type="match status" value="1"/>
</dbReference>
<dbReference type="FunFam" id="3.30.160.60:FF:000367">
    <property type="entry name" value="Zinc finger protein 572"/>
    <property type="match status" value="1"/>
</dbReference>
<dbReference type="FunFam" id="3.30.160.60:FF:001270">
    <property type="entry name" value="zinc finger protein 583 isoform X1"/>
    <property type="match status" value="1"/>
</dbReference>
<dbReference type="FunFam" id="3.30.160.60:FF:002134">
    <property type="entry name" value="Zinc finger protein 616"/>
    <property type="match status" value="1"/>
</dbReference>
<dbReference type="FunFam" id="3.30.160.60:FF:000953">
    <property type="entry name" value="Zinc finger protein 691"/>
    <property type="match status" value="1"/>
</dbReference>
<dbReference type="FunFam" id="3.30.160.60:FF:001630">
    <property type="entry name" value="Zinc finger protein 888"/>
    <property type="match status" value="1"/>
</dbReference>
<dbReference type="Gene3D" id="6.10.140.140">
    <property type="match status" value="1"/>
</dbReference>
<dbReference type="Gene3D" id="3.30.160.60">
    <property type="entry name" value="Classic Zinc Finger"/>
    <property type="match status" value="15"/>
</dbReference>
<dbReference type="InterPro" id="IPR050752">
    <property type="entry name" value="C2H2-ZF_domain"/>
</dbReference>
<dbReference type="InterPro" id="IPR001909">
    <property type="entry name" value="KRAB"/>
</dbReference>
<dbReference type="InterPro" id="IPR036051">
    <property type="entry name" value="KRAB_dom_sf"/>
</dbReference>
<dbReference type="InterPro" id="IPR036236">
    <property type="entry name" value="Znf_C2H2_sf"/>
</dbReference>
<dbReference type="InterPro" id="IPR013087">
    <property type="entry name" value="Znf_C2H2_type"/>
</dbReference>
<dbReference type="PANTHER" id="PTHR24384">
    <property type="entry name" value="FINGER PUTATIVE TRANSCRIPTION FACTOR FAMILY-RELATED"/>
    <property type="match status" value="1"/>
</dbReference>
<dbReference type="PANTHER" id="PTHR24384:SF246">
    <property type="entry name" value="GENE, 19965-RELATED"/>
    <property type="match status" value="1"/>
</dbReference>
<dbReference type="Pfam" id="PF01352">
    <property type="entry name" value="KRAB"/>
    <property type="match status" value="1"/>
</dbReference>
<dbReference type="Pfam" id="PF00096">
    <property type="entry name" value="zf-C2H2"/>
    <property type="match status" value="15"/>
</dbReference>
<dbReference type="SMART" id="SM00349">
    <property type="entry name" value="KRAB"/>
    <property type="match status" value="1"/>
</dbReference>
<dbReference type="SMART" id="SM00355">
    <property type="entry name" value="ZnF_C2H2"/>
    <property type="match status" value="15"/>
</dbReference>
<dbReference type="SUPFAM" id="SSF57667">
    <property type="entry name" value="beta-beta-alpha zinc fingers"/>
    <property type="match status" value="9"/>
</dbReference>
<dbReference type="SUPFAM" id="SSF109640">
    <property type="entry name" value="KRAB domain (Kruppel-associated box)"/>
    <property type="match status" value="1"/>
</dbReference>
<dbReference type="PROSITE" id="PS50805">
    <property type="entry name" value="KRAB"/>
    <property type="match status" value="1"/>
</dbReference>
<dbReference type="PROSITE" id="PS00028">
    <property type="entry name" value="ZINC_FINGER_C2H2_1"/>
    <property type="match status" value="15"/>
</dbReference>
<dbReference type="PROSITE" id="PS50157">
    <property type="entry name" value="ZINC_FINGER_C2H2_2"/>
    <property type="match status" value="15"/>
</dbReference>
<proteinExistence type="evidence at protein level"/>
<name>ZN528_HUMAN</name>
<gene>
    <name type="primary">ZNF528</name>
    <name type="synonym">KIAA1827</name>
</gene>
<feature type="chain" id="PRO_0000280418" description="Zinc finger protein 528">
    <location>
        <begin position="1"/>
        <end position="628"/>
    </location>
</feature>
<feature type="domain" description="KRAB" evidence="2">
    <location>
        <begin position="8"/>
        <end position="79"/>
    </location>
</feature>
<feature type="zinc finger region" description="C2H2-type 1" evidence="1">
    <location>
        <begin position="213"/>
        <end position="235"/>
    </location>
</feature>
<feature type="zinc finger region" description="C2H2-type 2" evidence="1">
    <location>
        <begin position="241"/>
        <end position="263"/>
    </location>
</feature>
<feature type="zinc finger region" description="C2H2-type 3" evidence="1">
    <location>
        <begin position="269"/>
        <end position="291"/>
    </location>
</feature>
<feature type="zinc finger region" description="C2H2-type 4" evidence="1">
    <location>
        <begin position="297"/>
        <end position="319"/>
    </location>
</feature>
<feature type="zinc finger region" description="C2H2-type 5" evidence="1">
    <location>
        <begin position="325"/>
        <end position="347"/>
    </location>
</feature>
<feature type="zinc finger region" description="C2H2-type 6" evidence="1">
    <location>
        <begin position="353"/>
        <end position="375"/>
    </location>
</feature>
<feature type="zinc finger region" description="C2H2-type 7" evidence="1">
    <location>
        <begin position="381"/>
        <end position="403"/>
    </location>
</feature>
<feature type="zinc finger region" description="C2H2-type 8" evidence="1">
    <location>
        <begin position="409"/>
        <end position="431"/>
    </location>
</feature>
<feature type="zinc finger region" description="C2H2-type 9" evidence="1">
    <location>
        <begin position="437"/>
        <end position="459"/>
    </location>
</feature>
<feature type="zinc finger region" description="C2H2-type 10" evidence="1">
    <location>
        <begin position="465"/>
        <end position="487"/>
    </location>
</feature>
<feature type="zinc finger region" description="C2H2-type 11" evidence="1">
    <location>
        <begin position="493"/>
        <end position="515"/>
    </location>
</feature>
<feature type="zinc finger region" description="C2H2-type 12" evidence="1">
    <location>
        <begin position="521"/>
        <end position="543"/>
    </location>
</feature>
<feature type="zinc finger region" description="C2H2-type 13" evidence="1">
    <location>
        <begin position="549"/>
        <end position="571"/>
    </location>
</feature>
<feature type="zinc finger region" description="C2H2-type 14" evidence="1">
    <location>
        <begin position="577"/>
        <end position="599"/>
    </location>
</feature>
<feature type="zinc finger region" description="C2H2-type 15" evidence="1">
    <location>
        <begin position="605"/>
        <end position="627"/>
    </location>
</feature>
<feature type="splice variant" id="VSP_023662" description="In isoform 2." evidence="3 4">
    <location>
        <begin position="1"/>
        <end position="233"/>
    </location>
</feature>
<feature type="sequence variant" id="VAR_052858" description="In dbSNP:rs324109.">
    <original>S</original>
    <variation>N</variation>
    <location>
        <position position="419"/>
    </location>
</feature>
<feature type="sequence conflict" description="In Ref. 2; CAD89949." evidence="5" ref="2">
    <original>Y</original>
    <variation>H</variation>
    <location>
        <position position="297"/>
    </location>
</feature>
<comment type="function">
    <text>May be involved in transcriptional regulation.</text>
</comment>
<comment type="subcellular location">
    <subcellularLocation>
        <location evidence="5">Nucleus</location>
    </subcellularLocation>
</comment>
<comment type="alternative products">
    <event type="alternative splicing"/>
    <isoform>
        <id>Q3MIS6-1</id>
        <name>1</name>
        <sequence type="displayed"/>
    </isoform>
    <isoform>
        <id>Q3MIS6-2</id>
        <name>2</name>
        <sequence type="described" ref="VSP_023662"/>
    </isoform>
</comment>
<comment type="similarity">
    <text evidence="5">Belongs to the krueppel C2H2-type zinc-finger protein family.</text>
</comment>
<comment type="sequence caution" evidence="5">
    <conflict type="erroneous initiation">
        <sequence resource="EMBL-CDS" id="BAB47456"/>
    </conflict>
</comment>
<reference key="1">
    <citation type="journal article" date="2004" name="Nat. Genet.">
        <title>Complete sequencing and characterization of 21,243 full-length human cDNAs.</title>
        <authorList>
            <person name="Ota T."/>
            <person name="Suzuki Y."/>
            <person name="Nishikawa T."/>
            <person name="Otsuki T."/>
            <person name="Sugiyama T."/>
            <person name="Irie R."/>
            <person name="Wakamatsu A."/>
            <person name="Hayashi K."/>
            <person name="Sato H."/>
            <person name="Nagai K."/>
            <person name="Kimura K."/>
            <person name="Makita H."/>
            <person name="Sekine M."/>
            <person name="Obayashi M."/>
            <person name="Nishi T."/>
            <person name="Shibahara T."/>
            <person name="Tanaka T."/>
            <person name="Ishii S."/>
            <person name="Yamamoto J."/>
            <person name="Saito K."/>
            <person name="Kawai Y."/>
            <person name="Isono Y."/>
            <person name="Nakamura Y."/>
            <person name="Nagahari K."/>
            <person name="Murakami K."/>
            <person name="Yasuda T."/>
            <person name="Iwayanagi T."/>
            <person name="Wagatsuma M."/>
            <person name="Shiratori A."/>
            <person name="Sudo H."/>
            <person name="Hosoiri T."/>
            <person name="Kaku Y."/>
            <person name="Kodaira H."/>
            <person name="Kondo H."/>
            <person name="Sugawara M."/>
            <person name="Takahashi M."/>
            <person name="Kanda K."/>
            <person name="Yokoi T."/>
            <person name="Furuya T."/>
            <person name="Kikkawa E."/>
            <person name="Omura Y."/>
            <person name="Abe K."/>
            <person name="Kamihara K."/>
            <person name="Katsuta N."/>
            <person name="Sato K."/>
            <person name="Tanikawa M."/>
            <person name="Yamazaki M."/>
            <person name="Ninomiya K."/>
            <person name="Ishibashi T."/>
            <person name="Yamashita H."/>
            <person name="Murakawa K."/>
            <person name="Fujimori K."/>
            <person name="Tanai H."/>
            <person name="Kimata M."/>
            <person name="Watanabe M."/>
            <person name="Hiraoka S."/>
            <person name="Chiba Y."/>
            <person name="Ishida S."/>
            <person name="Ono Y."/>
            <person name="Takiguchi S."/>
            <person name="Watanabe S."/>
            <person name="Yosida M."/>
            <person name="Hotuta T."/>
            <person name="Kusano J."/>
            <person name="Kanehori K."/>
            <person name="Takahashi-Fujii A."/>
            <person name="Hara H."/>
            <person name="Tanase T.-O."/>
            <person name="Nomura Y."/>
            <person name="Togiya S."/>
            <person name="Komai F."/>
            <person name="Hara R."/>
            <person name="Takeuchi K."/>
            <person name="Arita M."/>
            <person name="Imose N."/>
            <person name="Musashino K."/>
            <person name="Yuuki H."/>
            <person name="Oshima A."/>
            <person name="Sasaki N."/>
            <person name="Aotsuka S."/>
            <person name="Yoshikawa Y."/>
            <person name="Matsunawa H."/>
            <person name="Ichihara T."/>
            <person name="Shiohata N."/>
            <person name="Sano S."/>
            <person name="Moriya S."/>
            <person name="Momiyama H."/>
            <person name="Satoh N."/>
            <person name="Takami S."/>
            <person name="Terashima Y."/>
            <person name="Suzuki O."/>
            <person name="Nakagawa S."/>
            <person name="Senoh A."/>
            <person name="Mizoguchi H."/>
            <person name="Goto Y."/>
            <person name="Shimizu F."/>
            <person name="Wakebe H."/>
            <person name="Hishigaki H."/>
            <person name="Watanabe T."/>
            <person name="Sugiyama A."/>
            <person name="Takemoto M."/>
            <person name="Kawakami B."/>
            <person name="Yamazaki M."/>
            <person name="Watanabe K."/>
            <person name="Kumagai A."/>
            <person name="Itakura S."/>
            <person name="Fukuzumi Y."/>
            <person name="Fujimori Y."/>
            <person name="Komiyama M."/>
            <person name="Tashiro H."/>
            <person name="Tanigami A."/>
            <person name="Fujiwara T."/>
            <person name="Ono T."/>
            <person name="Yamada K."/>
            <person name="Fujii Y."/>
            <person name="Ozaki K."/>
            <person name="Hirao M."/>
            <person name="Ohmori Y."/>
            <person name="Kawabata A."/>
            <person name="Hikiji T."/>
            <person name="Kobatake N."/>
            <person name="Inagaki H."/>
            <person name="Ikema Y."/>
            <person name="Okamoto S."/>
            <person name="Okitani R."/>
            <person name="Kawakami T."/>
            <person name="Noguchi S."/>
            <person name="Itoh T."/>
            <person name="Shigeta K."/>
            <person name="Senba T."/>
            <person name="Matsumura K."/>
            <person name="Nakajima Y."/>
            <person name="Mizuno T."/>
            <person name="Morinaga M."/>
            <person name="Sasaki M."/>
            <person name="Togashi T."/>
            <person name="Oyama M."/>
            <person name="Hata H."/>
            <person name="Watanabe M."/>
            <person name="Komatsu T."/>
            <person name="Mizushima-Sugano J."/>
            <person name="Satoh T."/>
            <person name="Shirai Y."/>
            <person name="Takahashi Y."/>
            <person name="Nakagawa K."/>
            <person name="Okumura K."/>
            <person name="Nagase T."/>
            <person name="Nomura N."/>
            <person name="Kikuchi H."/>
            <person name="Masuho Y."/>
            <person name="Yamashita R."/>
            <person name="Nakai K."/>
            <person name="Yada T."/>
            <person name="Nakamura Y."/>
            <person name="Ohara O."/>
            <person name="Isogai T."/>
            <person name="Sugano S."/>
        </authorList>
    </citation>
    <scope>NUCLEOTIDE SEQUENCE [LARGE SCALE MRNA] (ISOFORM 2)</scope>
</reference>
<reference key="2">
    <citation type="journal article" date="2007" name="BMC Genomics">
        <title>The full-ORF clone resource of the German cDNA consortium.</title>
        <authorList>
            <person name="Bechtel S."/>
            <person name="Rosenfelder H."/>
            <person name="Duda A."/>
            <person name="Schmidt C.P."/>
            <person name="Ernst U."/>
            <person name="Wellenreuther R."/>
            <person name="Mehrle A."/>
            <person name="Schuster C."/>
            <person name="Bahr A."/>
            <person name="Bloecker H."/>
            <person name="Heubner D."/>
            <person name="Hoerlein A."/>
            <person name="Michel G."/>
            <person name="Wedler H."/>
            <person name="Koehrer K."/>
            <person name="Ottenwaelder B."/>
            <person name="Poustka A."/>
            <person name="Wiemann S."/>
            <person name="Schupp I."/>
        </authorList>
    </citation>
    <scope>NUCLEOTIDE SEQUENCE [LARGE SCALE MRNA] (ISOFORM 2)</scope>
    <source>
        <tissue>Spinal cord</tissue>
    </source>
</reference>
<reference key="3">
    <citation type="submission" date="2005-07" db="EMBL/GenBank/DDBJ databases">
        <authorList>
            <person name="Mural R.J."/>
            <person name="Istrail S."/>
            <person name="Sutton G.G."/>
            <person name="Florea L."/>
            <person name="Halpern A.L."/>
            <person name="Mobarry C.M."/>
            <person name="Lippert R."/>
            <person name="Walenz B."/>
            <person name="Shatkay H."/>
            <person name="Dew I."/>
            <person name="Miller J.R."/>
            <person name="Flanigan M.J."/>
            <person name="Edwards N.J."/>
            <person name="Bolanos R."/>
            <person name="Fasulo D."/>
            <person name="Halldorsson B.V."/>
            <person name="Hannenhalli S."/>
            <person name="Turner R."/>
            <person name="Yooseph S."/>
            <person name="Lu F."/>
            <person name="Nusskern D.R."/>
            <person name="Shue B.C."/>
            <person name="Zheng X.H."/>
            <person name="Zhong F."/>
            <person name="Delcher A.L."/>
            <person name="Huson D.H."/>
            <person name="Kravitz S.A."/>
            <person name="Mouchard L."/>
            <person name="Reinert K."/>
            <person name="Remington K.A."/>
            <person name="Clark A.G."/>
            <person name="Waterman M.S."/>
            <person name="Eichler E.E."/>
            <person name="Adams M.D."/>
            <person name="Hunkapiller M.W."/>
            <person name="Myers E.W."/>
            <person name="Venter J.C."/>
        </authorList>
    </citation>
    <scope>NUCLEOTIDE SEQUENCE [LARGE SCALE GENOMIC DNA]</scope>
</reference>
<reference key="4">
    <citation type="journal article" date="2004" name="Genome Res.">
        <title>The status, quality, and expansion of the NIH full-length cDNA project: the Mammalian Gene Collection (MGC).</title>
        <authorList>
            <consortium name="The MGC Project Team"/>
        </authorList>
    </citation>
    <scope>NUCLEOTIDE SEQUENCE [LARGE SCALE MRNA] (ISOFORM 1)</scope>
    <source>
        <tissue>Heart</tissue>
        <tissue>Lung</tissue>
    </source>
</reference>
<reference key="5">
    <citation type="journal article" date="2001" name="DNA Res.">
        <title>Prediction of the coding sequences of unidentified human genes. XX. The complete sequences of 100 new cDNA clones from brain which code for large proteins in vitro.</title>
        <authorList>
            <person name="Nagase T."/>
            <person name="Nakayama M."/>
            <person name="Nakajima D."/>
            <person name="Kikuno R."/>
            <person name="Ohara O."/>
        </authorList>
    </citation>
    <scope>NUCLEOTIDE SEQUENCE [LARGE SCALE MRNA] OF 166-628 (ISOFORM 1)</scope>
    <source>
        <tissue>Brain</tissue>
    </source>
</reference>
<sequence length="628" mass="72138">MALTQGPLKFMDVAIEFSQEEWKCLDPAQRTLYRDVMLENYRNLVSLGICLPDLSVTSMLEQKRDPWTLQSEEKIANDPDGRECIKGVNTERSSKLGSNAGNKPCKNQLGFTFQLHLSDLQLFQAERKISGCKHFEKPVSDNSSVSPLEKISSSVKSHLLNKYRNNFDHAPLLPQEQKAHIREKAYKCNEHGQVFRASASLTNQVIHNADNPYKCSECGKVFSCSSKLVIHRRMHTGEKPYKCHECGKLFSSNSNLSQHQRIHTGEKPYKCHECDKVFRSSSKLAQHQRIHTGEKPYKCHECDKVFNQIAHLVRHQKIHTGEKPYSCNKCGKVFSRHSYLAEHQTVHTGEKPYKCEECGKAFSVRSSLITHQLIHTGRKPYKCKECDKVFGRKCFLTSHQRIHTRERPYGCSQCGKIFSQKSDLIRHRKTHTDEKPYKCNKCGTAFREFSDLTAHFLIHSGEKPYECKECGKVFRYKSSLTSHHRIHTGEKPYKCNRCGKVFSRSSNLVCHQKIHTGEKPYKCNQCGKVFNQASYLTRHQIIHTGERPYRCSKCGKAFRGCSGLTAHLAIHTEKKSHECKECGKIFTQKSSLTNHHRIHIGEKPYKCTLCSKVFSHNSDLAQHQRVHS</sequence>
<accession>Q3MIS6</accession>
<accession>B3KPN4</accession>
<accession>Q86T88</accession>
<accession>Q96JK0</accession>
<organism>
    <name type="scientific">Homo sapiens</name>
    <name type="common">Human</name>
    <dbReference type="NCBI Taxonomy" id="9606"/>
    <lineage>
        <taxon>Eukaryota</taxon>
        <taxon>Metazoa</taxon>
        <taxon>Chordata</taxon>
        <taxon>Craniata</taxon>
        <taxon>Vertebrata</taxon>
        <taxon>Euteleostomi</taxon>
        <taxon>Mammalia</taxon>
        <taxon>Eutheria</taxon>
        <taxon>Euarchontoglires</taxon>
        <taxon>Primates</taxon>
        <taxon>Haplorrhini</taxon>
        <taxon>Catarrhini</taxon>
        <taxon>Hominidae</taxon>
        <taxon>Homo</taxon>
    </lineage>
</organism>